<feature type="chain" id="PRO_0000241032" description="S-adenosylmethionine synthase">
    <location>
        <begin position="1"/>
        <end position="382"/>
    </location>
</feature>
<feature type="region of interest" description="Flexible loop" evidence="1">
    <location>
        <begin position="100"/>
        <end position="110"/>
    </location>
</feature>
<feature type="binding site" description="in other chain" evidence="1">
    <location>
        <position position="16"/>
    </location>
    <ligand>
        <name>ATP</name>
        <dbReference type="ChEBI" id="CHEBI:30616"/>
        <note>ligand shared between two neighboring subunits</note>
    </ligand>
</feature>
<feature type="binding site" evidence="1">
    <location>
        <position position="18"/>
    </location>
    <ligand>
        <name>Mg(2+)</name>
        <dbReference type="ChEBI" id="CHEBI:18420"/>
    </ligand>
</feature>
<feature type="binding site" evidence="1">
    <location>
        <position position="44"/>
    </location>
    <ligand>
        <name>K(+)</name>
        <dbReference type="ChEBI" id="CHEBI:29103"/>
    </ligand>
</feature>
<feature type="binding site" description="in other chain" evidence="1">
    <location>
        <position position="57"/>
    </location>
    <ligand>
        <name>L-methionine</name>
        <dbReference type="ChEBI" id="CHEBI:57844"/>
        <note>ligand shared between two neighboring subunits</note>
    </ligand>
</feature>
<feature type="binding site" description="in other chain" evidence="1">
    <location>
        <position position="100"/>
    </location>
    <ligand>
        <name>L-methionine</name>
        <dbReference type="ChEBI" id="CHEBI:57844"/>
        <note>ligand shared between two neighboring subunits</note>
    </ligand>
</feature>
<feature type="binding site" description="in other chain" evidence="1">
    <location>
        <begin position="165"/>
        <end position="167"/>
    </location>
    <ligand>
        <name>ATP</name>
        <dbReference type="ChEBI" id="CHEBI:30616"/>
        <note>ligand shared between two neighboring subunits</note>
    </ligand>
</feature>
<feature type="binding site" evidence="1">
    <location>
        <position position="240"/>
    </location>
    <ligand>
        <name>ATP</name>
        <dbReference type="ChEBI" id="CHEBI:30616"/>
        <note>ligand shared between two neighboring subunits</note>
    </ligand>
</feature>
<feature type="binding site" evidence="1">
    <location>
        <position position="240"/>
    </location>
    <ligand>
        <name>L-methionine</name>
        <dbReference type="ChEBI" id="CHEBI:57844"/>
        <note>ligand shared between two neighboring subunits</note>
    </ligand>
</feature>
<feature type="binding site" description="in other chain" evidence="1">
    <location>
        <begin position="246"/>
        <end position="247"/>
    </location>
    <ligand>
        <name>ATP</name>
        <dbReference type="ChEBI" id="CHEBI:30616"/>
        <note>ligand shared between two neighboring subunits</note>
    </ligand>
</feature>
<feature type="binding site" evidence="1">
    <location>
        <position position="263"/>
    </location>
    <ligand>
        <name>ATP</name>
        <dbReference type="ChEBI" id="CHEBI:30616"/>
        <note>ligand shared between two neighboring subunits</note>
    </ligand>
</feature>
<feature type="binding site" evidence="1">
    <location>
        <position position="267"/>
    </location>
    <ligand>
        <name>ATP</name>
        <dbReference type="ChEBI" id="CHEBI:30616"/>
        <note>ligand shared between two neighboring subunits</note>
    </ligand>
</feature>
<feature type="binding site" description="in other chain" evidence="1">
    <location>
        <position position="271"/>
    </location>
    <ligand>
        <name>L-methionine</name>
        <dbReference type="ChEBI" id="CHEBI:57844"/>
        <note>ligand shared between two neighboring subunits</note>
    </ligand>
</feature>
<proteinExistence type="inferred from homology"/>
<keyword id="KW-0067">ATP-binding</keyword>
<keyword id="KW-0963">Cytoplasm</keyword>
<keyword id="KW-0460">Magnesium</keyword>
<keyword id="KW-0479">Metal-binding</keyword>
<keyword id="KW-0547">Nucleotide-binding</keyword>
<keyword id="KW-0554">One-carbon metabolism</keyword>
<keyword id="KW-0630">Potassium</keyword>
<keyword id="KW-1185">Reference proteome</keyword>
<keyword id="KW-0808">Transferase</keyword>
<protein>
    <recommendedName>
        <fullName evidence="1">S-adenosylmethionine synthase</fullName>
        <shortName evidence="1">AdoMet synthase</shortName>
        <ecNumber evidence="1">2.5.1.6</ecNumber>
    </recommendedName>
    <alternativeName>
        <fullName evidence="1">MAT</fullName>
    </alternativeName>
    <alternativeName>
        <fullName evidence="1">Methionine adenosyltransferase</fullName>
    </alternativeName>
</protein>
<sequence>MAQYSLFTSESVSEGHPDKMADQISDAILDAILADDKNARVAVETMVKTGMAIVAGEVRTSTYIDLEDLIRDVILDIGYNSSDVGFDGASCAVLNAIGKQSADIAMGVDEANNKDLGAGDQGLMFGYATNETDVLMPAPIYYSHRLVEKQAELRKNGKLNWLRPDAKSQVTLRYDNGKPVAVDAVVLSTQHNPDVSQATIREAVMEEIIKTTLPAEWLHADTKYHINPTGQFIIGGPVGDCGLTGRKIIVDTYGGMARHGGGAFSGKDPSKVDRSAAYAGRYVAKNIVAAGLASRCEIQVSYAIGVAEPTSISVNTFGTGSIADSEISKLVAQHFDLRPRGIIEMLDLLRPIYRKTAAYGHFGREEPEFTWEKTDKVAALQG</sequence>
<dbReference type="EC" id="2.5.1.6" evidence="1"/>
<dbReference type="EMBL" id="CP000282">
    <property type="protein sequence ID" value="ABD79734.1"/>
    <property type="molecule type" value="Genomic_DNA"/>
</dbReference>
<dbReference type="RefSeq" id="WP_011466955.1">
    <property type="nucleotide sequence ID" value="NC_007912.1"/>
</dbReference>
<dbReference type="SMR" id="Q21NJ5"/>
<dbReference type="STRING" id="203122.Sde_0470"/>
<dbReference type="GeneID" id="98612170"/>
<dbReference type="KEGG" id="sde:Sde_0470"/>
<dbReference type="eggNOG" id="COG0192">
    <property type="taxonomic scope" value="Bacteria"/>
</dbReference>
<dbReference type="HOGENOM" id="CLU_041802_1_1_6"/>
<dbReference type="OrthoDB" id="9801686at2"/>
<dbReference type="UniPathway" id="UPA00315">
    <property type="reaction ID" value="UER00080"/>
</dbReference>
<dbReference type="Proteomes" id="UP000001947">
    <property type="component" value="Chromosome"/>
</dbReference>
<dbReference type="GO" id="GO:0005737">
    <property type="term" value="C:cytoplasm"/>
    <property type="evidence" value="ECO:0007669"/>
    <property type="project" value="UniProtKB-SubCell"/>
</dbReference>
<dbReference type="GO" id="GO:0005524">
    <property type="term" value="F:ATP binding"/>
    <property type="evidence" value="ECO:0007669"/>
    <property type="project" value="UniProtKB-UniRule"/>
</dbReference>
<dbReference type="GO" id="GO:0000287">
    <property type="term" value="F:magnesium ion binding"/>
    <property type="evidence" value="ECO:0007669"/>
    <property type="project" value="UniProtKB-UniRule"/>
</dbReference>
<dbReference type="GO" id="GO:0004478">
    <property type="term" value="F:methionine adenosyltransferase activity"/>
    <property type="evidence" value="ECO:0007669"/>
    <property type="project" value="UniProtKB-UniRule"/>
</dbReference>
<dbReference type="GO" id="GO:0006730">
    <property type="term" value="P:one-carbon metabolic process"/>
    <property type="evidence" value="ECO:0007669"/>
    <property type="project" value="UniProtKB-KW"/>
</dbReference>
<dbReference type="GO" id="GO:0006556">
    <property type="term" value="P:S-adenosylmethionine biosynthetic process"/>
    <property type="evidence" value="ECO:0007669"/>
    <property type="project" value="UniProtKB-UniRule"/>
</dbReference>
<dbReference type="CDD" id="cd18079">
    <property type="entry name" value="S-AdoMet_synt"/>
    <property type="match status" value="1"/>
</dbReference>
<dbReference type="FunFam" id="3.30.300.10:FF:000003">
    <property type="entry name" value="S-adenosylmethionine synthase"/>
    <property type="match status" value="1"/>
</dbReference>
<dbReference type="FunFam" id="3.30.300.10:FF:000004">
    <property type="entry name" value="S-adenosylmethionine synthase"/>
    <property type="match status" value="1"/>
</dbReference>
<dbReference type="Gene3D" id="3.30.300.10">
    <property type="match status" value="3"/>
</dbReference>
<dbReference type="HAMAP" id="MF_00086">
    <property type="entry name" value="S_AdoMet_synth1"/>
    <property type="match status" value="1"/>
</dbReference>
<dbReference type="InterPro" id="IPR022631">
    <property type="entry name" value="ADOMET_SYNTHASE_CS"/>
</dbReference>
<dbReference type="InterPro" id="IPR022630">
    <property type="entry name" value="S-AdoMet_synt_C"/>
</dbReference>
<dbReference type="InterPro" id="IPR022629">
    <property type="entry name" value="S-AdoMet_synt_central"/>
</dbReference>
<dbReference type="InterPro" id="IPR022628">
    <property type="entry name" value="S-AdoMet_synt_N"/>
</dbReference>
<dbReference type="InterPro" id="IPR002133">
    <property type="entry name" value="S-AdoMet_synthetase"/>
</dbReference>
<dbReference type="InterPro" id="IPR022636">
    <property type="entry name" value="S-AdoMet_synthetase_sfam"/>
</dbReference>
<dbReference type="NCBIfam" id="TIGR01034">
    <property type="entry name" value="metK"/>
    <property type="match status" value="1"/>
</dbReference>
<dbReference type="PANTHER" id="PTHR11964">
    <property type="entry name" value="S-ADENOSYLMETHIONINE SYNTHETASE"/>
    <property type="match status" value="1"/>
</dbReference>
<dbReference type="Pfam" id="PF02773">
    <property type="entry name" value="S-AdoMet_synt_C"/>
    <property type="match status" value="1"/>
</dbReference>
<dbReference type="Pfam" id="PF02772">
    <property type="entry name" value="S-AdoMet_synt_M"/>
    <property type="match status" value="1"/>
</dbReference>
<dbReference type="Pfam" id="PF00438">
    <property type="entry name" value="S-AdoMet_synt_N"/>
    <property type="match status" value="1"/>
</dbReference>
<dbReference type="PIRSF" id="PIRSF000497">
    <property type="entry name" value="MAT"/>
    <property type="match status" value="1"/>
</dbReference>
<dbReference type="SUPFAM" id="SSF55973">
    <property type="entry name" value="S-adenosylmethionine synthetase"/>
    <property type="match status" value="3"/>
</dbReference>
<dbReference type="PROSITE" id="PS00376">
    <property type="entry name" value="ADOMET_SYNTHASE_1"/>
    <property type="match status" value="1"/>
</dbReference>
<dbReference type="PROSITE" id="PS00377">
    <property type="entry name" value="ADOMET_SYNTHASE_2"/>
    <property type="match status" value="1"/>
</dbReference>
<comment type="function">
    <text evidence="1">Catalyzes the formation of S-adenosylmethionine (AdoMet) from methionine and ATP. The overall synthetic reaction is composed of two sequential steps, AdoMet formation and the subsequent tripolyphosphate hydrolysis which occurs prior to release of AdoMet from the enzyme.</text>
</comment>
<comment type="catalytic activity">
    <reaction evidence="1">
        <text>L-methionine + ATP + H2O = S-adenosyl-L-methionine + phosphate + diphosphate</text>
        <dbReference type="Rhea" id="RHEA:21080"/>
        <dbReference type="ChEBI" id="CHEBI:15377"/>
        <dbReference type="ChEBI" id="CHEBI:30616"/>
        <dbReference type="ChEBI" id="CHEBI:33019"/>
        <dbReference type="ChEBI" id="CHEBI:43474"/>
        <dbReference type="ChEBI" id="CHEBI:57844"/>
        <dbReference type="ChEBI" id="CHEBI:59789"/>
        <dbReference type="EC" id="2.5.1.6"/>
    </reaction>
</comment>
<comment type="cofactor">
    <cofactor evidence="1">
        <name>Mg(2+)</name>
        <dbReference type="ChEBI" id="CHEBI:18420"/>
    </cofactor>
    <text evidence="1">Binds 2 divalent ions per subunit.</text>
</comment>
<comment type="cofactor">
    <cofactor evidence="1">
        <name>K(+)</name>
        <dbReference type="ChEBI" id="CHEBI:29103"/>
    </cofactor>
    <text evidence="1">Binds 1 potassium ion per subunit.</text>
</comment>
<comment type="pathway">
    <text evidence="1">Amino-acid biosynthesis; S-adenosyl-L-methionine biosynthesis; S-adenosyl-L-methionine from L-methionine: step 1/1.</text>
</comment>
<comment type="subunit">
    <text evidence="1">Homotetramer; dimer of dimers.</text>
</comment>
<comment type="subcellular location">
    <subcellularLocation>
        <location evidence="1">Cytoplasm</location>
    </subcellularLocation>
</comment>
<comment type="similarity">
    <text evidence="1">Belongs to the AdoMet synthase family.</text>
</comment>
<accession>Q21NJ5</accession>
<organism>
    <name type="scientific">Saccharophagus degradans (strain 2-40 / ATCC 43961 / DSM 17024)</name>
    <dbReference type="NCBI Taxonomy" id="203122"/>
    <lineage>
        <taxon>Bacteria</taxon>
        <taxon>Pseudomonadati</taxon>
        <taxon>Pseudomonadota</taxon>
        <taxon>Gammaproteobacteria</taxon>
        <taxon>Cellvibrionales</taxon>
        <taxon>Cellvibrionaceae</taxon>
        <taxon>Saccharophagus</taxon>
    </lineage>
</organism>
<evidence type="ECO:0000255" key="1">
    <source>
        <dbReference type="HAMAP-Rule" id="MF_00086"/>
    </source>
</evidence>
<gene>
    <name evidence="1" type="primary">metK</name>
    <name type="ordered locus">Sde_0470</name>
</gene>
<name>METK_SACD2</name>
<reference key="1">
    <citation type="journal article" date="2008" name="PLoS Genet.">
        <title>Complete genome sequence of the complex carbohydrate-degrading marine bacterium, Saccharophagus degradans strain 2-40 T.</title>
        <authorList>
            <person name="Weiner R.M."/>
            <person name="Taylor L.E. II"/>
            <person name="Henrissat B."/>
            <person name="Hauser L."/>
            <person name="Land M."/>
            <person name="Coutinho P.M."/>
            <person name="Rancurel C."/>
            <person name="Saunders E.H."/>
            <person name="Longmire A.G."/>
            <person name="Zhang H."/>
            <person name="Bayer E.A."/>
            <person name="Gilbert H.J."/>
            <person name="Larimer F."/>
            <person name="Zhulin I.B."/>
            <person name="Ekborg N.A."/>
            <person name="Lamed R."/>
            <person name="Richardson P.M."/>
            <person name="Borovok I."/>
            <person name="Hutcheson S."/>
        </authorList>
    </citation>
    <scope>NUCLEOTIDE SEQUENCE [LARGE SCALE GENOMIC DNA]</scope>
    <source>
        <strain>2-40 / ATCC 43961 / DSM 17024</strain>
    </source>
</reference>